<reference key="1">
    <citation type="submission" date="2006-12" db="EMBL/GenBank/DDBJ databases">
        <title>Complete sequence of Mycobacterium vanbaalenii PYR-1.</title>
        <authorList>
            <consortium name="US DOE Joint Genome Institute"/>
            <person name="Copeland A."/>
            <person name="Lucas S."/>
            <person name="Lapidus A."/>
            <person name="Barry K."/>
            <person name="Detter J.C."/>
            <person name="Glavina del Rio T."/>
            <person name="Hammon N."/>
            <person name="Israni S."/>
            <person name="Dalin E."/>
            <person name="Tice H."/>
            <person name="Pitluck S."/>
            <person name="Singan V."/>
            <person name="Schmutz J."/>
            <person name="Larimer F."/>
            <person name="Land M."/>
            <person name="Hauser L."/>
            <person name="Kyrpides N."/>
            <person name="Anderson I.J."/>
            <person name="Miller C."/>
            <person name="Richardson P."/>
        </authorList>
    </citation>
    <scope>NUCLEOTIDE SEQUENCE [LARGE SCALE GENOMIC DNA]</scope>
    <source>
        <strain>DSM 7251 / JCM 13017 / BCRC 16820 / KCTC 9966 / NRRL B-24157 / PYR-1</strain>
    </source>
</reference>
<evidence type="ECO:0000255" key="1">
    <source>
        <dbReference type="HAMAP-Rule" id="MF_00407"/>
    </source>
</evidence>
<name>DNLI_MYCVP</name>
<comment type="function">
    <text evidence="1">DNA ligase that seals nicks in double-stranded DNA during DNA replication, DNA recombination and DNA repair.</text>
</comment>
<comment type="catalytic activity">
    <reaction evidence="1">
        <text>ATP + (deoxyribonucleotide)n-3'-hydroxyl + 5'-phospho-(deoxyribonucleotide)m = (deoxyribonucleotide)n+m + AMP + diphosphate.</text>
        <dbReference type="EC" id="6.5.1.1"/>
    </reaction>
</comment>
<comment type="cofactor">
    <cofactor evidence="1">
        <name>Mg(2+)</name>
        <dbReference type="ChEBI" id="CHEBI:18420"/>
    </cofactor>
</comment>
<comment type="similarity">
    <text evidence="1">Belongs to the ATP-dependent DNA ligase family.</text>
</comment>
<protein>
    <recommendedName>
        <fullName evidence="1">Probable DNA ligase</fullName>
        <ecNumber evidence="1">6.5.1.1</ecNumber>
    </recommendedName>
    <alternativeName>
        <fullName evidence="1">Polydeoxyribonucleotide synthase [ATP]</fullName>
    </alternativeName>
</protein>
<proteinExistence type="inferred from homology"/>
<sequence length="534" mass="56093">MLLVDVANASADVAAMSARLAKVARIAELLRTAGRQGDARLVRVVVSWLSGELTQRQIGVGWRSVRSVPDPAAQPSLTVEDVDARFGEIGSTSGKGSQARRAALLAELFAAATAVEQVFLRRLLTGELRQGALGGVMADAVGKAAGVPSAVVRRAAMLGGDLPAVAAAAVTDGESALAQFTLQVGRPVGPMLAQTATGVADALDRFGGTALFEAKLDGARVQIHRRGDAVSVFTRSLDDVTARLPEVVDATLALPVTELIADAEAIALRPDGRPHRFQITASRFGRRGGTPDAGTQRLSVFFFDLLHADGVDLLDLPTGERIATLDATVPREQRVDRLLTSDPEAAQAFLDATLAAGHEGVMAKSPTAPYEAGRRGAGWLKVKPVHTLDLVVLAVEWGSGRRTGKLSNIHLGARDPATGGFVMLGKTFKGMTDEMLAWQTERFLELADGAAPAATADHGAAPAATADHGAADGFTVTVRPEQVVEIAFDGIQTSSRYPGGMALRFARVLCYRDDKTAAEADTIDTVRALHERAN</sequence>
<organism>
    <name type="scientific">Mycolicibacterium vanbaalenii (strain DSM 7251 / JCM 13017 / BCRC 16820 / KCTC 9966 / NRRL B-24157 / PYR-1)</name>
    <name type="common">Mycobacterium vanbaalenii</name>
    <dbReference type="NCBI Taxonomy" id="350058"/>
    <lineage>
        <taxon>Bacteria</taxon>
        <taxon>Bacillati</taxon>
        <taxon>Actinomycetota</taxon>
        <taxon>Actinomycetes</taxon>
        <taxon>Mycobacteriales</taxon>
        <taxon>Mycobacteriaceae</taxon>
        <taxon>Mycolicibacterium</taxon>
    </lineage>
</organism>
<keyword id="KW-0067">ATP-binding</keyword>
<keyword id="KW-0131">Cell cycle</keyword>
<keyword id="KW-0132">Cell division</keyword>
<keyword id="KW-0227">DNA damage</keyword>
<keyword id="KW-0233">DNA recombination</keyword>
<keyword id="KW-0234">DNA repair</keyword>
<keyword id="KW-0235">DNA replication</keyword>
<keyword id="KW-0436">Ligase</keyword>
<keyword id="KW-0460">Magnesium</keyword>
<keyword id="KW-0479">Metal-binding</keyword>
<keyword id="KW-0547">Nucleotide-binding</keyword>
<dbReference type="EC" id="6.5.1.1" evidence="1"/>
<dbReference type="EMBL" id="CP000511">
    <property type="protein sequence ID" value="ABM12842.1"/>
    <property type="molecule type" value="Genomic_DNA"/>
</dbReference>
<dbReference type="RefSeq" id="WP_011779258.1">
    <property type="nucleotide sequence ID" value="NC_008726.1"/>
</dbReference>
<dbReference type="SMR" id="A1T6P2"/>
<dbReference type="STRING" id="350058.Mvan_2025"/>
<dbReference type="KEGG" id="mva:Mvan_2025"/>
<dbReference type="eggNOG" id="COG1793">
    <property type="taxonomic scope" value="Bacteria"/>
</dbReference>
<dbReference type="HOGENOM" id="CLU_005138_6_1_11"/>
<dbReference type="Proteomes" id="UP000009159">
    <property type="component" value="Chromosome"/>
</dbReference>
<dbReference type="GO" id="GO:0005524">
    <property type="term" value="F:ATP binding"/>
    <property type="evidence" value="ECO:0007669"/>
    <property type="project" value="UniProtKB-UniRule"/>
</dbReference>
<dbReference type="GO" id="GO:0003677">
    <property type="term" value="F:DNA binding"/>
    <property type="evidence" value="ECO:0007669"/>
    <property type="project" value="InterPro"/>
</dbReference>
<dbReference type="GO" id="GO:0003910">
    <property type="term" value="F:DNA ligase (ATP) activity"/>
    <property type="evidence" value="ECO:0007669"/>
    <property type="project" value="UniProtKB-UniRule"/>
</dbReference>
<dbReference type="GO" id="GO:0046872">
    <property type="term" value="F:metal ion binding"/>
    <property type="evidence" value="ECO:0007669"/>
    <property type="project" value="UniProtKB-KW"/>
</dbReference>
<dbReference type="GO" id="GO:0051301">
    <property type="term" value="P:cell division"/>
    <property type="evidence" value="ECO:0007669"/>
    <property type="project" value="UniProtKB-KW"/>
</dbReference>
<dbReference type="GO" id="GO:0071897">
    <property type="term" value="P:DNA biosynthetic process"/>
    <property type="evidence" value="ECO:0007669"/>
    <property type="project" value="InterPro"/>
</dbReference>
<dbReference type="GO" id="GO:0006310">
    <property type="term" value="P:DNA recombination"/>
    <property type="evidence" value="ECO:0007669"/>
    <property type="project" value="UniProtKB-UniRule"/>
</dbReference>
<dbReference type="GO" id="GO:0006281">
    <property type="term" value="P:DNA repair"/>
    <property type="evidence" value="ECO:0007669"/>
    <property type="project" value="UniProtKB-UniRule"/>
</dbReference>
<dbReference type="GO" id="GO:0006260">
    <property type="term" value="P:DNA replication"/>
    <property type="evidence" value="ECO:0007669"/>
    <property type="project" value="UniProtKB-UniRule"/>
</dbReference>
<dbReference type="CDD" id="cd07901">
    <property type="entry name" value="Adenylation_DNA_ligase_Arch_LigB"/>
    <property type="match status" value="1"/>
</dbReference>
<dbReference type="Gene3D" id="1.10.3260.10">
    <property type="entry name" value="DNA ligase, ATP-dependent, N-terminal domain"/>
    <property type="match status" value="1"/>
</dbReference>
<dbReference type="Gene3D" id="3.30.470.30">
    <property type="entry name" value="DNA ligase/mRNA capping enzyme"/>
    <property type="match status" value="1"/>
</dbReference>
<dbReference type="Gene3D" id="2.40.50.140">
    <property type="entry name" value="Nucleic acid-binding proteins"/>
    <property type="match status" value="1"/>
</dbReference>
<dbReference type="HAMAP" id="MF_00407">
    <property type="entry name" value="DNA_ligase"/>
    <property type="match status" value="1"/>
</dbReference>
<dbReference type="InterPro" id="IPR050191">
    <property type="entry name" value="ATP-dep_DNA_ligase"/>
</dbReference>
<dbReference type="InterPro" id="IPR022865">
    <property type="entry name" value="DNA_ligae_ATP-dep_bac/arc"/>
</dbReference>
<dbReference type="InterPro" id="IPR000977">
    <property type="entry name" value="DNA_ligase_ATP-dep"/>
</dbReference>
<dbReference type="InterPro" id="IPR012309">
    <property type="entry name" value="DNA_ligase_ATP-dep_C"/>
</dbReference>
<dbReference type="InterPro" id="IPR012310">
    <property type="entry name" value="DNA_ligase_ATP-dep_cent"/>
</dbReference>
<dbReference type="InterPro" id="IPR016059">
    <property type="entry name" value="DNA_ligase_ATP-dep_CS"/>
</dbReference>
<dbReference type="InterPro" id="IPR012308">
    <property type="entry name" value="DNA_ligase_ATP-dep_N"/>
</dbReference>
<dbReference type="InterPro" id="IPR036599">
    <property type="entry name" value="DNA_ligase_N_sf"/>
</dbReference>
<dbReference type="InterPro" id="IPR012340">
    <property type="entry name" value="NA-bd_OB-fold"/>
</dbReference>
<dbReference type="NCBIfam" id="TIGR00574">
    <property type="entry name" value="dnl1"/>
    <property type="match status" value="1"/>
</dbReference>
<dbReference type="NCBIfam" id="NF002868">
    <property type="entry name" value="PRK03180.1"/>
    <property type="match status" value="1"/>
</dbReference>
<dbReference type="PANTHER" id="PTHR45674">
    <property type="entry name" value="DNA LIGASE 1/3 FAMILY MEMBER"/>
    <property type="match status" value="1"/>
</dbReference>
<dbReference type="PANTHER" id="PTHR45674:SF13">
    <property type="entry name" value="DNA LIGASE-RELATED"/>
    <property type="match status" value="1"/>
</dbReference>
<dbReference type="Pfam" id="PF04679">
    <property type="entry name" value="DNA_ligase_A_C"/>
    <property type="match status" value="1"/>
</dbReference>
<dbReference type="Pfam" id="PF01068">
    <property type="entry name" value="DNA_ligase_A_M"/>
    <property type="match status" value="1"/>
</dbReference>
<dbReference type="Pfam" id="PF04675">
    <property type="entry name" value="DNA_ligase_A_N"/>
    <property type="match status" value="1"/>
</dbReference>
<dbReference type="SUPFAM" id="SSF117018">
    <property type="entry name" value="ATP-dependent DNA ligase DNA-binding domain"/>
    <property type="match status" value="1"/>
</dbReference>
<dbReference type="SUPFAM" id="SSF56091">
    <property type="entry name" value="DNA ligase/mRNA capping enzyme, catalytic domain"/>
    <property type="match status" value="1"/>
</dbReference>
<dbReference type="SUPFAM" id="SSF50249">
    <property type="entry name" value="Nucleic acid-binding proteins"/>
    <property type="match status" value="1"/>
</dbReference>
<dbReference type="PROSITE" id="PS00697">
    <property type="entry name" value="DNA_LIGASE_A1"/>
    <property type="match status" value="1"/>
</dbReference>
<dbReference type="PROSITE" id="PS00333">
    <property type="entry name" value="DNA_LIGASE_A2"/>
    <property type="match status" value="1"/>
</dbReference>
<dbReference type="PROSITE" id="PS50160">
    <property type="entry name" value="DNA_LIGASE_A3"/>
    <property type="match status" value="1"/>
</dbReference>
<accession>A1T6P2</accession>
<gene>
    <name evidence="1" type="primary">lig</name>
    <name type="ordered locus">Mvan_2025</name>
</gene>
<feature type="chain" id="PRO_0000365234" description="Probable DNA ligase">
    <location>
        <begin position="1"/>
        <end position="534"/>
    </location>
</feature>
<feature type="active site" description="N6-AMP-lysine intermediate" evidence="1">
    <location>
        <position position="215"/>
    </location>
</feature>
<feature type="binding site" evidence="1">
    <location>
        <position position="213"/>
    </location>
    <ligand>
        <name>ATP</name>
        <dbReference type="ChEBI" id="CHEBI:30616"/>
    </ligand>
</feature>
<feature type="binding site" evidence="1">
    <location>
        <position position="220"/>
    </location>
    <ligand>
        <name>ATP</name>
        <dbReference type="ChEBI" id="CHEBI:30616"/>
    </ligand>
</feature>
<feature type="binding site" evidence="1">
    <location>
        <position position="235"/>
    </location>
    <ligand>
        <name>ATP</name>
        <dbReference type="ChEBI" id="CHEBI:30616"/>
    </ligand>
</feature>
<feature type="binding site" evidence="1">
    <location>
        <position position="264"/>
    </location>
    <ligand>
        <name>ATP</name>
        <dbReference type="ChEBI" id="CHEBI:30616"/>
    </ligand>
</feature>
<feature type="binding site" evidence="1">
    <location>
        <position position="303"/>
    </location>
    <ligand>
        <name>ATP</name>
        <dbReference type="ChEBI" id="CHEBI:30616"/>
    </ligand>
</feature>
<feature type="binding site" evidence="1">
    <location>
        <position position="375"/>
    </location>
    <ligand>
        <name>ATP</name>
        <dbReference type="ChEBI" id="CHEBI:30616"/>
    </ligand>
</feature>
<feature type="binding site" evidence="1">
    <location>
        <position position="381"/>
    </location>
    <ligand>
        <name>ATP</name>
        <dbReference type="ChEBI" id="CHEBI:30616"/>
    </ligand>
</feature>